<accession>Q9VSE7</accession>
<feature type="signal peptide" evidence="2">
    <location>
        <begin position="1"/>
        <end position="22"/>
    </location>
</feature>
<feature type="chain" id="PRO_0000013028" description="Probable G-protein coupled receptor Mth-like 7">
    <location>
        <begin position="23"/>
        <end position="491"/>
    </location>
</feature>
<feature type="topological domain" description="Extracellular" evidence="2">
    <location>
        <begin position="23"/>
        <end position="167"/>
    </location>
</feature>
<feature type="transmembrane region" description="Helical; Name=1" evidence="2">
    <location>
        <begin position="168"/>
        <end position="188"/>
    </location>
</feature>
<feature type="topological domain" description="Cytoplasmic" evidence="2">
    <location>
        <begin position="189"/>
        <end position="222"/>
    </location>
</feature>
<feature type="transmembrane region" description="Helical; Name=2" evidence="2">
    <location>
        <begin position="223"/>
        <end position="243"/>
    </location>
</feature>
<feature type="topological domain" description="Extracellular" evidence="2">
    <location>
        <begin position="244"/>
        <end position="252"/>
    </location>
</feature>
<feature type="transmembrane region" description="Helical; Name=3" evidence="2">
    <location>
        <begin position="253"/>
        <end position="273"/>
    </location>
</feature>
<feature type="topological domain" description="Cytoplasmic" evidence="2">
    <location>
        <begin position="274"/>
        <end position="325"/>
    </location>
</feature>
<feature type="transmembrane region" description="Helical; Name=4" evidence="2">
    <location>
        <begin position="326"/>
        <end position="346"/>
    </location>
</feature>
<feature type="topological domain" description="Extracellular" evidence="2">
    <location>
        <begin position="347"/>
        <end position="372"/>
    </location>
</feature>
<feature type="transmembrane region" description="Helical; Name=5" evidence="2">
    <location>
        <begin position="373"/>
        <end position="393"/>
    </location>
</feature>
<feature type="topological domain" description="Cytoplasmic" evidence="2">
    <location>
        <begin position="394"/>
        <end position="434"/>
    </location>
</feature>
<feature type="transmembrane region" description="Helical; Name=6" evidence="2">
    <location>
        <begin position="435"/>
        <end position="455"/>
    </location>
</feature>
<feature type="topological domain" description="Extracellular" evidence="2">
    <location>
        <begin position="456"/>
        <end position="458"/>
    </location>
</feature>
<feature type="transmembrane region" description="Helical; Name=7" evidence="2">
    <location>
        <begin position="459"/>
        <end position="479"/>
    </location>
</feature>
<feature type="topological domain" description="Cytoplasmic" evidence="2">
    <location>
        <begin position="480"/>
        <end position="491"/>
    </location>
</feature>
<feature type="glycosylation site" description="N-linked (GlcNAc...) asparagine" evidence="2">
    <location>
        <position position="18"/>
    </location>
</feature>
<feature type="glycosylation site" description="N-linked (GlcNAc...) asparagine" evidence="2">
    <location>
        <position position="42"/>
    </location>
</feature>
<feature type="glycosylation site" description="N-linked (GlcNAc...) asparagine" evidence="2">
    <location>
        <position position="248"/>
    </location>
</feature>
<feature type="disulfide bond" evidence="1">
    <location>
        <begin position="27"/>
        <end position="80"/>
    </location>
</feature>
<feature type="disulfide bond" evidence="1">
    <location>
        <begin position="82"/>
        <end position="87"/>
    </location>
</feature>
<feature type="disulfide bond" evidence="1">
    <location>
        <begin position="92"/>
        <end position="103"/>
    </location>
</feature>
<feature type="splice variant" id="VSP_010782" description="In isoform B." evidence="3">
    <location>
        <begin position="160"/>
        <end position="175"/>
    </location>
</feature>
<dbReference type="EMBL" id="AE014296">
    <property type="protein sequence ID" value="AAF50475.2"/>
    <property type="molecule type" value="Genomic_DNA"/>
</dbReference>
<dbReference type="EMBL" id="AE014296">
    <property type="protein sequence ID" value="AAO41271.1"/>
    <property type="molecule type" value="Genomic_DNA"/>
</dbReference>
<dbReference type="RefSeq" id="NP_648181.2">
    <molecule id="Q9VSE7-2"/>
    <property type="nucleotide sequence ID" value="NM_139924.3"/>
</dbReference>
<dbReference type="RefSeq" id="NP_788475.1">
    <molecule id="Q9VSE7-1"/>
    <property type="nucleotide sequence ID" value="NM_176297.1"/>
</dbReference>
<dbReference type="SMR" id="Q9VSE7"/>
<dbReference type="FunCoup" id="Q9VSE7">
    <property type="interactions" value="23"/>
</dbReference>
<dbReference type="STRING" id="7227.FBpp0076449"/>
<dbReference type="GlyCosmos" id="Q9VSE7">
    <property type="glycosylation" value="3 sites, No reported glycans"/>
</dbReference>
<dbReference type="GlyGen" id="Q9VSE7">
    <property type="glycosylation" value="3 sites"/>
</dbReference>
<dbReference type="PaxDb" id="7227-FBpp0076449"/>
<dbReference type="EnsemblMetazoa" id="FBtr0076726">
    <molecule id="Q9VSE7-2"/>
    <property type="protein sequence ID" value="FBpp0076449"/>
    <property type="gene ID" value="FBgn0035847"/>
</dbReference>
<dbReference type="EnsemblMetazoa" id="FBtr0076727">
    <molecule id="Q9VSE7-1"/>
    <property type="protein sequence ID" value="FBpp0076450"/>
    <property type="gene ID" value="FBgn0035847"/>
</dbReference>
<dbReference type="GeneID" id="38910"/>
<dbReference type="KEGG" id="dme:Dmel_CG7476"/>
<dbReference type="AGR" id="FB:FBgn0035847"/>
<dbReference type="CTD" id="38910"/>
<dbReference type="FlyBase" id="FBgn0035847">
    <property type="gene designation" value="mthl7"/>
</dbReference>
<dbReference type="VEuPathDB" id="VectorBase:FBgn0035847"/>
<dbReference type="eggNOG" id="KOG4193">
    <property type="taxonomic scope" value="Eukaryota"/>
</dbReference>
<dbReference type="GeneTree" id="ENSGT00940000166745"/>
<dbReference type="InParanoid" id="Q9VSE7"/>
<dbReference type="OMA" id="GRIGCIN"/>
<dbReference type="OrthoDB" id="7857589at2759"/>
<dbReference type="PhylomeDB" id="Q9VSE7"/>
<dbReference type="BioGRID-ORCS" id="38910">
    <property type="hits" value="0 hits in 1 CRISPR screen"/>
</dbReference>
<dbReference type="GenomeRNAi" id="38910"/>
<dbReference type="PRO" id="PR:Q9VSE7"/>
<dbReference type="Proteomes" id="UP000000803">
    <property type="component" value="Chromosome 3L"/>
</dbReference>
<dbReference type="GO" id="GO:0016020">
    <property type="term" value="C:membrane"/>
    <property type="evidence" value="ECO:0000250"/>
    <property type="project" value="FlyBase"/>
</dbReference>
<dbReference type="GO" id="GO:0005886">
    <property type="term" value="C:plasma membrane"/>
    <property type="evidence" value="ECO:0000318"/>
    <property type="project" value="GO_Central"/>
</dbReference>
<dbReference type="GO" id="GO:0008528">
    <property type="term" value="F:G protein-coupled peptide receptor activity"/>
    <property type="evidence" value="ECO:0000318"/>
    <property type="project" value="GO_Central"/>
</dbReference>
<dbReference type="GO" id="GO:0004930">
    <property type="term" value="F:G protein-coupled receptor activity"/>
    <property type="evidence" value="ECO:0000250"/>
    <property type="project" value="FlyBase"/>
</dbReference>
<dbReference type="GO" id="GO:0007166">
    <property type="term" value="P:cell surface receptor signaling pathway"/>
    <property type="evidence" value="ECO:0007669"/>
    <property type="project" value="InterPro"/>
</dbReference>
<dbReference type="GO" id="GO:0008340">
    <property type="term" value="P:determination of adult lifespan"/>
    <property type="evidence" value="ECO:0000250"/>
    <property type="project" value="UniProtKB"/>
</dbReference>
<dbReference type="GO" id="GO:0007186">
    <property type="term" value="P:G protein-coupled receptor signaling pathway"/>
    <property type="evidence" value="ECO:0000250"/>
    <property type="project" value="FlyBase"/>
</dbReference>
<dbReference type="GO" id="GO:0042594">
    <property type="term" value="P:response to starvation"/>
    <property type="evidence" value="ECO:0000250"/>
    <property type="project" value="UniProtKB"/>
</dbReference>
<dbReference type="CDD" id="cd15039">
    <property type="entry name" value="7tmB3_Methuselah-like"/>
    <property type="match status" value="1"/>
</dbReference>
<dbReference type="FunFam" id="1.20.1070.10:FF:000297">
    <property type="entry name" value="G-protein coupled receptor Mth"/>
    <property type="match status" value="1"/>
</dbReference>
<dbReference type="FunFam" id="2.170.180.11:FF:000001">
    <property type="entry name" value="G-protein coupled receptor Mth"/>
    <property type="match status" value="1"/>
</dbReference>
<dbReference type="Gene3D" id="2.30.160.11">
    <property type="match status" value="1"/>
</dbReference>
<dbReference type="Gene3D" id="2.170.180.11">
    <property type="entry name" value="Methuselah ectodomain, domain 2"/>
    <property type="match status" value="1"/>
</dbReference>
<dbReference type="Gene3D" id="1.20.1070.10">
    <property type="entry name" value="Rhodopsin 7-helix transmembrane proteins"/>
    <property type="match status" value="1"/>
</dbReference>
<dbReference type="InterPro" id="IPR017981">
    <property type="entry name" value="GPCR_2-like_7TM"/>
</dbReference>
<dbReference type="InterPro" id="IPR044860">
    <property type="entry name" value="Methusela_ecto_dom_1"/>
</dbReference>
<dbReference type="InterPro" id="IPR023311">
    <property type="entry name" value="Methusela_ecto_dom_2"/>
</dbReference>
<dbReference type="InterPro" id="IPR010596">
    <property type="entry name" value="Methuselah_N_dom"/>
</dbReference>
<dbReference type="InterPro" id="IPR036272">
    <property type="entry name" value="Methuselah_N_sf"/>
</dbReference>
<dbReference type="InterPro" id="IPR051384">
    <property type="entry name" value="Mth_GPCR"/>
</dbReference>
<dbReference type="PANTHER" id="PTHR47154">
    <property type="entry name" value="G-PROTEIN COUPLED RECEPTOR MTH-RELATED"/>
    <property type="match status" value="1"/>
</dbReference>
<dbReference type="PANTHER" id="PTHR47154:SF2">
    <property type="entry name" value="G-PROTEIN COUPLED RECEPTOR MTH-RELATED"/>
    <property type="match status" value="1"/>
</dbReference>
<dbReference type="Pfam" id="PF06652">
    <property type="entry name" value="Methuselah_N"/>
    <property type="match status" value="1"/>
</dbReference>
<dbReference type="SUPFAM" id="SSF63877">
    <property type="entry name" value="Methuselah ectodomain"/>
    <property type="match status" value="1"/>
</dbReference>
<dbReference type="PROSITE" id="PS50261">
    <property type="entry name" value="G_PROTEIN_RECEP_F2_4"/>
    <property type="match status" value="1"/>
</dbReference>
<comment type="subcellular location">
    <subcellularLocation>
        <location evidence="3">Cell membrane</location>
        <topology evidence="3">Multi-pass membrane protein</topology>
    </subcellularLocation>
</comment>
<comment type="alternative products">
    <event type="alternative splicing"/>
    <isoform>
        <id>Q9VSE7-2</id>
        <name>A</name>
        <sequence type="displayed"/>
    </isoform>
    <isoform>
        <id>Q9VSE7-1</id>
        <name>B</name>
        <sequence type="described" ref="VSP_010782"/>
    </isoform>
</comment>
<comment type="similarity">
    <text evidence="3">Belongs to the G-protein coupled receptor 2 family. Mth subfamily.</text>
</comment>
<sequence length="491" mass="57383">MRLPWVIFCTVLLLIFTNNSNADIPGCNYYDTVDISYIERQNDSYLYDDIEIPASLTGYYEFRQFGDGSITPIEKHLRACVCSVRPCIRICCPAKNFLANGKCDDGLKEELARFKPYIYFTYMDLQARVPLTDMAIIRDEFFDCDEMIYISDFNYFLEEVSIQIFNKCGLIVWFQDGKFWVTVDLFMEKQDYCLYRHNFDSDFPKSMWIIRHRCTSHISPGSLEILIITMICFVLTIAVYLYIKKLRNVTGKCIVCCIVSRFIQCLIMILDHLNLLNGICSPAGYSSHFFRMASNLWLSVISYHTWKVLTSLNRVDPNYRFLRYNAFVWSTAAIMTGSIYIVNQIWENDPSKWNWLPLVGFIRCSVKDWHPSVWIYISGPSLALSTFNVAMFALTAIYIRKVKGGINKFTNEEEGRINCINFDSQTYLQFLRLSIVMGLTWIFNVIPYSARLHIFWEWVGIISEYFHSAFGIVLFVLLVLKRSTWTLMMDS</sequence>
<protein>
    <recommendedName>
        <fullName>Probable G-protein coupled receptor Mth-like 7</fullName>
    </recommendedName>
    <alternativeName>
        <fullName>Protein methuselah-like 7</fullName>
    </alternativeName>
</protein>
<reference key="1">
    <citation type="journal article" date="2000" name="Science">
        <title>The genome sequence of Drosophila melanogaster.</title>
        <authorList>
            <person name="Adams M.D."/>
            <person name="Celniker S.E."/>
            <person name="Holt R.A."/>
            <person name="Evans C.A."/>
            <person name="Gocayne J.D."/>
            <person name="Amanatides P.G."/>
            <person name="Scherer S.E."/>
            <person name="Li P.W."/>
            <person name="Hoskins R.A."/>
            <person name="Galle R.F."/>
            <person name="George R.A."/>
            <person name="Lewis S.E."/>
            <person name="Richards S."/>
            <person name="Ashburner M."/>
            <person name="Henderson S.N."/>
            <person name="Sutton G.G."/>
            <person name="Wortman J.R."/>
            <person name="Yandell M.D."/>
            <person name="Zhang Q."/>
            <person name="Chen L.X."/>
            <person name="Brandon R.C."/>
            <person name="Rogers Y.-H.C."/>
            <person name="Blazej R.G."/>
            <person name="Champe M."/>
            <person name="Pfeiffer B.D."/>
            <person name="Wan K.H."/>
            <person name="Doyle C."/>
            <person name="Baxter E.G."/>
            <person name="Helt G."/>
            <person name="Nelson C.R."/>
            <person name="Miklos G.L.G."/>
            <person name="Abril J.F."/>
            <person name="Agbayani A."/>
            <person name="An H.-J."/>
            <person name="Andrews-Pfannkoch C."/>
            <person name="Baldwin D."/>
            <person name="Ballew R.M."/>
            <person name="Basu A."/>
            <person name="Baxendale J."/>
            <person name="Bayraktaroglu L."/>
            <person name="Beasley E.M."/>
            <person name="Beeson K.Y."/>
            <person name="Benos P.V."/>
            <person name="Berman B.P."/>
            <person name="Bhandari D."/>
            <person name="Bolshakov S."/>
            <person name="Borkova D."/>
            <person name="Botchan M.R."/>
            <person name="Bouck J."/>
            <person name="Brokstein P."/>
            <person name="Brottier P."/>
            <person name="Burtis K.C."/>
            <person name="Busam D.A."/>
            <person name="Butler H."/>
            <person name="Cadieu E."/>
            <person name="Center A."/>
            <person name="Chandra I."/>
            <person name="Cherry J.M."/>
            <person name="Cawley S."/>
            <person name="Dahlke C."/>
            <person name="Davenport L.B."/>
            <person name="Davies P."/>
            <person name="de Pablos B."/>
            <person name="Delcher A."/>
            <person name="Deng Z."/>
            <person name="Mays A.D."/>
            <person name="Dew I."/>
            <person name="Dietz S.M."/>
            <person name="Dodson K."/>
            <person name="Doup L.E."/>
            <person name="Downes M."/>
            <person name="Dugan-Rocha S."/>
            <person name="Dunkov B.C."/>
            <person name="Dunn P."/>
            <person name="Durbin K.J."/>
            <person name="Evangelista C.C."/>
            <person name="Ferraz C."/>
            <person name="Ferriera S."/>
            <person name="Fleischmann W."/>
            <person name="Fosler C."/>
            <person name="Gabrielian A.E."/>
            <person name="Garg N.S."/>
            <person name="Gelbart W.M."/>
            <person name="Glasser K."/>
            <person name="Glodek A."/>
            <person name="Gong F."/>
            <person name="Gorrell J.H."/>
            <person name="Gu Z."/>
            <person name="Guan P."/>
            <person name="Harris M."/>
            <person name="Harris N.L."/>
            <person name="Harvey D.A."/>
            <person name="Heiman T.J."/>
            <person name="Hernandez J.R."/>
            <person name="Houck J."/>
            <person name="Hostin D."/>
            <person name="Houston K.A."/>
            <person name="Howland T.J."/>
            <person name="Wei M.-H."/>
            <person name="Ibegwam C."/>
            <person name="Jalali M."/>
            <person name="Kalush F."/>
            <person name="Karpen G.H."/>
            <person name="Ke Z."/>
            <person name="Kennison J.A."/>
            <person name="Ketchum K.A."/>
            <person name="Kimmel B.E."/>
            <person name="Kodira C.D."/>
            <person name="Kraft C.L."/>
            <person name="Kravitz S."/>
            <person name="Kulp D."/>
            <person name="Lai Z."/>
            <person name="Lasko P."/>
            <person name="Lei Y."/>
            <person name="Levitsky A.A."/>
            <person name="Li J.H."/>
            <person name="Li Z."/>
            <person name="Liang Y."/>
            <person name="Lin X."/>
            <person name="Liu X."/>
            <person name="Mattei B."/>
            <person name="McIntosh T.C."/>
            <person name="McLeod M.P."/>
            <person name="McPherson D."/>
            <person name="Merkulov G."/>
            <person name="Milshina N.V."/>
            <person name="Mobarry C."/>
            <person name="Morris J."/>
            <person name="Moshrefi A."/>
            <person name="Mount S.M."/>
            <person name="Moy M."/>
            <person name="Murphy B."/>
            <person name="Murphy L."/>
            <person name="Muzny D.M."/>
            <person name="Nelson D.L."/>
            <person name="Nelson D.R."/>
            <person name="Nelson K.A."/>
            <person name="Nixon K."/>
            <person name="Nusskern D.R."/>
            <person name="Pacleb J.M."/>
            <person name="Palazzolo M."/>
            <person name="Pittman G.S."/>
            <person name="Pan S."/>
            <person name="Pollard J."/>
            <person name="Puri V."/>
            <person name="Reese M.G."/>
            <person name="Reinert K."/>
            <person name="Remington K."/>
            <person name="Saunders R.D.C."/>
            <person name="Scheeler F."/>
            <person name="Shen H."/>
            <person name="Shue B.C."/>
            <person name="Siden-Kiamos I."/>
            <person name="Simpson M."/>
            <person name="Skupski M.P."/>
            <person name="Smith T.J."/>
            <person name="Spier E."/>
            <person name="Spradling A.C."/>
            <person name="Stapleton M."/>
            <person name="Strong R."/>
            <person name="Sun E."/>
            <person name="Svirskas R."/>
            <person name="Tector C."/>
            <person name="Turner R."/>
            <person name="Venter E."/>
            <person name="Wang A.H."/>
            <person name="Wang X."/>
            <person name="Wang Z.-Y."/>
            <person name="Wassarman D.A."/>
            <person name="Weinstock G.M."/>
            <person name="Weissenbach J."/>
            <person name="Williams S.M."/>
            <person name="Woodage T."/>
            <person name="Worley K.C."/>
            <person name="Wu D."/>
            <person name="Yang S."/>
            <person name="Yao Q.A."/>
            <person name="Ye J."/>
            <person name="Yeh R.-F."/>
            <person name="Zaveri J.S."/>
            <person name="Zhan M."/>
            <person name="Zhang G."/>
            <person name="Zhao Q."/>
            <person name="Zheng L."/>
            <person name="Zheng X.H."/>
            <person name="Zhong F.N."/>
            <person name="Zhong W."/>
            <person name="Zhou X."/>
            <person name="Zhu S.C."/>
            <person name="Zhu X."/>
            <person name="Smith H.O."/>
            <person name="Gibbs R.A."/>
            <person name="Myers E.W."/>
            <person name="Rubin G.M."/>
            <person name="Venter J.C."/>
        </authorList>
    </citation>
    <scope>NUCLEOTIDE SEQUENCE [LARGE SCALE GENOMIC DNA]</scope>
    <source>
        <strain>Berkeley</strain>
    </source>
</reference>
<reference key="2">
    <citation type="journal article" date="2002" name="Genome Biol.">
        <title>Annotation of the Drosophila melanogaster euchromatic genome: a systematic review.</title>
        <authorList>
            <person name="Misra S."/>
            <person name="Crosby M.A."/>
            <person name="Mungall C.J."/>
            <person name="Matthews B.B."/>
            <person name="Campbell K.S."/>
            <person name="Hradecky P."/>
            <person name="Huang Y."/>
            <person name="Kaminker J.S."/>
            <person name="Millburn G.H."/>
            <person name="Prochnik S.E."/>
            <person name="Smith C.D."/>
            <person name="Tupy J.L."/>
            <person name="Whitfield E.J."/>
            <person name="Bayraktaroglu L."/>
            <person name="Berman B.P."/>
            <person name="Bettencourt B.R."/>
            <person name="Celniker S.E."/>
            <person name="de Grey A.D.N.J."/>
            <person name="Drysdale R.A."/>
            <person name="Harris N.L."/>
            <person name="Richter J."/>
            <person name="Russo S."/>
            <person name="Schroeder A.J."/>
            <person name="Shu S.Q."/>
            <person name="Stapleton M."/>
            <person name="Yamada C."/>
            <person name="Ashburner M."/>
            <person name="Gelbart W.M."/>
            <person name="Rubin G.M."/>
            <person name="Lewis S.E."/>
        </authorList>
    </citation>
    <scope>GENOME REANNOTATION</scope>
    <scope>ALTERNATIVE SPLICING</scope>
    <source>
        <strain>Berkeley</strain>
    </source>
</reference>
<reference key="3">
    <citation type="journal article" date="2000" name="J. Cell Biol.">
        <title>Drosophila melanogaster G protein-coupled receptors.</title>
        <authorList>
            <person name="Brody T."/>
            <person name="Cravchik A."/>
        </authorList>
    </citation>
    <scope>REVIEW</scope>
</reference>
<evidence type="ECO:0000250" key="1">
    <source>
        <dbReference type="UniProtKB" id="O97148"/>
    </source>
</evidence>
<evidence type="ECO:0000255" key="2"/>
<evidence type="ECO:0000305" key="3"/>
<proteinExistence type="inferred from homology"/>
<gene>
    <name type="primary">mthl7</name>
    <name type="ORF">CG7476</name>
</gene>
<keyword id="KW-0025">Alternative splicing</keyword>
<keyword id="KW-1003">Cell membrane</keyword>
<keyword id="KW-1015">Disulfide bond</keyword>
<keyword id="KW-0297">G-protein coupled receptor</keyword>
<keyword id="KW-0325">Glycoprotein</keyword>
<keyword id="KW-0472">Membrane</keyword>
<keyword id="KW-0675">Receptor</keyword>
<keyword id="KW-1185">Reference proteome</keyword>
<keyword id="KW-0732">Signal</keyword>
<keyword id="KW-0807">Transducer</keyword>
<keyword id="KW-0812">Transmembrane</keyword>
<keyword id="KW-1133">Transmembrane helix</keyword>
<organism>
    <name type="scientific">Drosophila melanogaster</name>
    <name type="common">Fruit fly</name>
    <dbReference type="NCBI Taxonomy" id="7227"/>
    <lineage>
        <taxon>Eukaryota</taxon>
        <taxon>Metazoa</taxon>
        <taxon>Ecdysozoa</taxon>
        <taxon>Arthropoda</taxon>
        <taxon>Hexapoda</taxon>
        <taxon>Insecta</taxon>
        <taxon>Pterygota</taxon>
        <taxon>Neoptera</taxon>
        <taxon>Endopterygota</taxon>
        <taxon>Diptera</taxon>
        <taxon>Brachycera</taxon>
        <taxon>Muscomorpha</taxon>
        <taxon>Ephydroidea</taxon>
        <taxon>Drosophilidae</taxon>
        <taxon>Drosophila</taxon>
        <taxon>Sophophora</taxon>
    </lineage>
</organism>
<name>MTH7_DROME</name>